<reference key="1">
    <citation type="submission" date="2005-08" db="EMBL/GenBank/DDBJ databases">
        <title>Complete sequence of chromosome 1 of Synechococcus elongatus PCC 7942.</title>
        <authorList>
            <consortium name="US DOE Joint Genome Institute"/>
            <person name="Copeland A."/>
            <person name="Lucas S."/>
            <person name="Lapidus A."/>
            <person name="Barry K."/>
            <person name="Detter J.C."/>
            <person name="Glavina T."/>
            <person name="Hammon N."/>
            <person name="Israni S."/>
            <person name="Pitluck S."/>
            <person name="Schmutz J."/>
            <person name="Larimer F."/>
            <person name="Land M."/>
            <person name="Kyrpides N."/>
            <person name="Lykidis A."/>
            <person name="Golden S."/>
            <person name="Richardson P."/>
        </authorList>
    </citation>
    <scope>NUCLEOTIDE SEQUENCE [LARGE SCALE GENOMIC DNA]</scope>
    <source>
        <strain>ATCC 33912 / PCC 7942 / FACHB-805</strain>
    </source>
</reference>
<feature type="chain" id="PRO_0000350479" description="Probable dual-specificity RNA methyltransferase RlmN">
    <location>
        <begin position="1"/>
        <end position="361"/>
    </location>
</feature>
<feature type="domain" description="Radical SAM core" evidence="2">
    <location>
        <begin position="108"/>
        <end position="344"/>
    </location>
</feature>
<feature type="active site" description="Proton acceptor" evidence="1">
    <location>
        <position position="102"/>
    </location>
</feature>
<feature type="active site" description="S-methylcysteine intermediate" evidence="1">
    <location>
        <position position="347"/>
    </location>
</feature>
<feature type="binding site" evidence="1">
    <location>
        <position position="122"/>
    </location>
    <ligand>
        <name>[4Fe-4S] cluster</name>
        <dbReference type="ChEBI" id="CHEBI:49883"/>
        <note>4Fe-4S-S-AdoMet</note>
    </ligand>
</feature>
<feature type="binding site" evidence="1">
    <location>
        <position position="126"/>
    </location>
    <ligand>
        <name>[4Fe-4S] cluster</name>
        <dbReference type="ChEBI" id="CHEBI:49883"/>
        <note>4Fe-4S-S-AdoMet</note>
    </ligand>
</feature>
<feature type="binding site" evidence="1">
    <location>
        <position position="129"/>
    </location>
    <ligand>
        <name>[4Fe-4S] cluster</name>
        <dbReference type="ChEBI" id="CHEBI:49883"/>
        <note>4Fe-4S-S-AdoMet</note>
    </ligand>
</feature>
<feature type="binding site" evidence="1">
    <location>
        <begin position="169"/>
        <end position="170"/>
    </location>
    <ligand>
        <name>S-adenosyl-L-methionine</name>
        <dbReference type="ChEBI" id="CHEBI:59789"/>
    </ligand>
</feature>
<feature type="binding site" evidence="1">
    <location>
        <position position="199"/>
    </location>
    <ligand>
        <name>S-adenosyl-L-methionine</name>
        <dbReference type="ChEBI" id="CHEBI:59789"/>
    </ligand>
</feature>
<feature type="binding site" evidence="1">
    <location>
        <begin position="228"/>
        <end position="230"/>
    </location>
    <ligand>
        <name>S-adenosyl-L-methionine</name>
        <dbReference type="ChEBI" id="CHEBI:59789"/>
    </ligand>
</feature>
<feature type="binding site" evidence="1">
    <location>
        <position position="304"/>
    </location>
    <ligand>
        <name>S-adenosyl-L-methionine</name>
        <dbReference type="ChEBI" id="CHEBI:59789"/>
    </ligand>
</feature>
<feature type="disulfide bond" description="(transient)" evidence="1">
    <location>
        <begin position="115"/>
        <end position="347"/>
    </location>
</feature>
<dbReference type="EC" id="2.1.1.192" evidence="1"/>
<dbReference type="EMBL" id="CP000100">
    <property type="protein sequence ID" value="ABB57788.1"/>
    <property type="molecule type" value="Genomic_DNA"/>
</dbReference>
<dbReference type="SMR" id="Q31MD1"/>
<dbReference type="STRING" id="1140.Synpcc7942_1758"/>
<dbReference type="PaxDb" id="1140-Synpcc7942_1758"/>
<dbReference type="KEGG" id="syf:Synpcc7942_1758"/>
<dbReference type="eggNOG" id="COG0820">
    <property type="taxonomic scope" value="Bacteria"/>
</dbReference>
<dbReference type="HOGENOM" id="CLU_029101_1_1_3"/>
<dbReference type="OrthoDB" id="9793973at2"/>
<dbReference type="BioCyc" id="SYNEL:SYNPCC7942_1758-MONOMER"/>
<dbReference type="Proteomes" id="UP000889800">
    <property type="component" value="Chromosome"/>
</dbReference>
<dbReference type="GO" id="GO:0005737">
    <property type="term" value="C:cytoplasm"/>
    <property type="evidence" value="ECO:0007669"/>
    <property type="project" value="UniProtKB-SubCell"/>
</dbReference>
<dbReference type="GO" id="GO:0051539">
    <property type="term" value="F:4 iron, 4 sulfur cluster binding"/>
    <property type="evidence" value="ECO:0007669"/>
    <property type="project" value="UniProtKB-UniRule"/>
</dbReference>
<dbReference type="GO" id="GO:0046872">
    <property type="term" value="F:metal ion binding"/>
    <property type="evidence" value="ECO:0007669"/>
    <property type="project" value="UniProtKB-KW"/>
</dbReference>
<dbReference type="GO" id="GO:0070040">
    <property type="term" value="F:rRNA (adenine(2503)-C2-)-methyltransferase activity"/>
    <property type="evidence" value="ECO:0007669"/>
    <property type="project" value="UniProtKB-UniRule"/>
</dbReference>
<dbReference type="GO" id="GO:0019843">
    <property type="term" value="F:rRNA binding"/>
    <property type="evidence" value="ECO:0007669"/>
    <property type="project" value="UniProtKB-UniRule"/>
</dbReference>
<dbReference type="GO" id="GO:0002935">
    <property type="term" value="F:tRNA (adenine(37)-C2)-methyltransferase activity"/>
    <property type="evidence" value="ECO:0007669"/>
    <property type="project" value="UniProtKB-UniRule"/>
</dbReference>
<dbReference type="GO" id="GO:0000049">
    <property type="term" value="F:tRNA binding"/>
    <property type="evidence" value="ECO:0007669"/>
    <property type="project" value="UniProtKB-UniRule"/>
</dbReference>
<dbReference type="GO" id="GO:0070475">
    <property type="term" value="P:rRNA base methylation"/>
    <property type="evidence" value="ECO:0007669"/>
    <property type="project" value="UniProtKB-UniRule"/>
</dbReference>
<dbReference type="GO" id="GO:0030488">
    <property type="term" value="P:tRNA methylation"/>
    <property type="evidence" value="ECO:0007669"/>
    <property type="project" value="UniProtKB-UniRule"/>
</dbReference>
<dbReference type="CDD" id="cd01335">
    <property type="entry name" value="Radical_SAM"/>
    <property type="match status" value="1"/>
</dbReference>
<dbReference type="FunFam" id="3.20.20.70:FF:000014">
    <property type="entry name" value="Probable dual-specificity RNA methyltransferase RlmN"/>
    <property type="match status" value="1"/>
</dbReference>
<dbReference type="Gene3D" id="1.10.150.530">
    <property type="match status" value="1"/>
</dbReference>
<dbReference type="Gene3D" id="3.20.20.70">
    <property type="entry name" value="Aldolase class I"/>
    <property type="match status" value="1"/>
</dbReference>
<dbReference type="HAMAP" id="MF_01849">
    <property type="entry name" value="RNA_methyltr_RlmN"/>
    <property type="match status" value="1"/>
</dbReference>
<dbReference type="InterPro" id="IPR013785">
    <property type="entry name" value="Aldolase_TIM"/>
</dbReference>
<dbReference type="InterPro" id="IPR040072">
    <property type="entry name" value="Methyltransferase_A"/>
</dbReference>
<dbReference type="InterPro" id="IPR048641">
    <property type="entry name" value="RlmN_N"/>
</dbReference>
<dbReference type="InterPro" id="IPR027492">
    <property type="entry name" value="RNA_MTrfase_RlmN"/>
</dbReference>
<dbReference type="InterPro" id="IPR004383">
    <property type="entry name" value="rRNA_lsu_MTrfase_RlmN/Cfr"/>
</dbReference>
<dbReference type="InterPro" id="IPR007197">
    <property type="entry name" value="rSAM"/>
</dbReference>
<dbReference type="NCBIfam" id="TIGR00048">
    <property type="entry name" value="rRNA_mod_RlmN"/>
    <property type="match status" value="1"/>
</dbReference>
<dbReference type="PANTHER" id="PTHR30544">
    <property type="entry name" value="23S RRNA METHYLTRANSFERASE"/>
    <property type="match status" value="1"/>
</dbReference>
<dbReference type="PANTHER" id="PTHR30544:SF5">
    <property type="entry name" value="RADICAL SAM CORE DOMAIN-CONTAINING PROTEIN"/>
    <property type="match status" value="1"/>
</dbReference>
<dbReference type="Pfam" id="PF04055">
    <property type="entry name" value="Radical_SAM"/>
    <property type="match status" value="1"/>
</dbReference>
<dbReference type="Pfam" id="PF21016">
    <property type="entry name" value="RlmN_N"/>
    <property type="match status" value="1"/>
</dbReference>
<dbReference type="PIRSF" id="PIRSF006004">
    <property type="entry name" value="CHP00048"/>
    <property type="match status" value="1"/>
</dbReference>
<dbReference type="SFLD" id="SFLDF00275">
    <property type="entry name" value="adenosine_C2_methyltransferase"/>
    <property type="match status" value="1"/>
</dbReference>
<dbReference type="SFLD" id="SFLDG01062">
    <property type="entry name" value="methyltransferase_(Class_A)"/>
    <property type="match status" value="1"/>
</dbReference>
<dbReference type="SUPFAM" id="SSF102114">
    <property type="entry name" value="Radical SAM enzymes"/>
    <property type="match status" value="1"/>
</dbReference>
<dbReference type="PROSITE" id="PS51918">
    <property type="entry name" value="RADICAL_SAM"/>
    <property type="match status" value="1"/>
</dbReference>
<evidence type="ECO:0000255" key="1">
    <source>
        <dbReference type="HAMAP-Rule" id="MF_01849"/>
    </source>
</evidence>
<evidence type="ECO:0000255" key="2">
    <source>
        <dbReference type="PROSITE-ProRule" id="PRU01266"/>
    </source>
</evidence>
<accession>Q31MD1</accession>
<proteinExistence type="inferred from homology"/>
<sequence>MARSGLEPQTVTDATPLLGRSLPELQDWVVAQGQPSYRAKQLYQWLYERSIHNLAEISVFPKAWRQSLQAVPVGRSQIVDRSVSPSGTIKYLLRLHDGEIIEAVGIPSGDRLTVCVSSQLGCAMACDFCATGKGGFRRHLAPHEIIDQVLTVQEDWQQRVSNIVFMGMGEPLLNLDAVLAAIRCLNQDIGIGQRGITVSTVGIPGHIRRLAETKRVGDRPLQFTLAVSLHAPNQAIRDRLIPSSRHYPITDLLQECRDYVQITGRRVTFEYILLAGLNDQPEQAEQLAQLLRGFQSHVNLIPYNPIDEVEYQRPSKARVDAFADALRQQRVAVTVRWSKGLGADAACGQLRANRSTATLPA</sequence>
<gene>
    <name evidence="1" type="primary">rlmN</name>
    <name type="ordered locus">Synpcc7942_1758</name>
</gene>
<comment type="function">
    <text evidence="1">Specifically methylates position 2 of adenine 2503 in 23S rRNA and position 2 of adenine 37 in tRNAs.</text>
</comment>
<comment type="catalytic activity">
    <reaction evidence="1">
        <text>adenosine(2503) in 23S rRNA + 2 reduced [2Fe-2S]-[ferredoxin] + 2 S-adenosyl-L-methionine = 2-methyladenosine(2503) in 23S rRNA + 5'-deoxyadenosine + L-methionine + 2 oxidized [2Fe-2S]-[ferredoxin] + S-adenosyl-L-homocysteine</text>
        <dbReference type="Rhea" id="RHEA:42916"/>
        <dbReference type="Rhea" id="RHEA-COMP:10000"/>
        <dbReference type="Rhea" id="RHEA-COMP:10001"/>
        <dbReference type="Rhea" id="RHEA-COMP:10152"/>
        <dbReference type="Rhea" id="RHEA-COMP:10282"/>
        <dbReference type="ChEBI" id="CHEBI:17319"/>
        <dbReference type="ChEBI" id="CHEBI:33737"/>
        <dbReference type="ChEBI" id="CHEBI:33738"/>
        <dbReference type="ChEBI" id="CHEBI:57844"/>
        <dbReference type="ChEBI" id="CHEBI:57856"/>
        <dbReference type="ChEBI" id="CHEBI:59789"/>
        <dbReference type="ChEBI" id="CHEBI:74411"/>
        <dbReference type="ChEBI" id="CHEBI:74497"/>
        <dbReference type="EC" id="2.1.1.192"/>
    </reaction>
</comment>
<comment type="catalytic activity">
    <reaction evidence="1">
        <text>adenosine(37) in tRNA + 2 reduced [2Fe-2S]-[ferredoxin] + 2 S-adenosyl-L-methionine = 2-methyladenosine(37) in tRNA + 5'-deoxyadenosine + L-methionine + 2 oxidized [2Fe-2S]-[ferredoxin] + S-adenosyl-L-homocysteine</text>
        <dbReference type="Rhea" id="RHEA:43332"/>
        <dbReference type="Rhea" id="RHEA-COMP:10000"/>
        <dbReference type="Rhea" id="RHEA-COMP:10001"/>
        <dbReference type="Rhea" id="RHEA-COMP:10162"/>
        <dbReference type="Rhea" id="RHEA-COMP:10485"/>
        <dbReference type="ChEBI" id="CHEBI:17319"/>
        <dbReference type="ChEBI" id="CHEBI:33737"/>
        <dbReference type="ChEBI" id="CHEBI:33738"/>
        <dbReference type="ChEBI" id="CHEBI:57844"/>
        <dbReference type="ChEBI" id="CHEBI:57856"/>
        <dbReference type="ChEBI" id="CHEBI:59789"/>
        <dbReference type="ChEBI" id="CHEBI:74411"/>
        <dbReference type="ChEBI" id="CHEBI:74497"/>
        <dbReference type="EC" id="2.1.1.192"/>
    </reaction>
</comment>
<comment type="cofactor">
    <cofactor evidence="1">
        <name>[4Fe-4S] cluster</name>
        <dbReference type="ChEBI" id="CHEBI:49883"/>
    </cofactor>
    <text evidence="1">Binds 1 [4Fe-4S] cluster. The cluster is coordinated with 3 cysteines and an exchangeable S-adenosyl-L-methionine.</text>
</comment>
<comment type="subcellular location">
    <subcellularLocation>
        <location evidence="1">Cytoplasm</location>
    </subcellularLocation>
</comment>
<comment type="miscellaneous">
    <text evidence="1">Reaction proceeds by a ping-pong mechanism involving intermediate methylation of a conserved cysteine residue.</text>
</comment>
<comment type="similarity">
    <text evidence="1">Belongs to the radical SAM superfamily. RlmN family.</text>
</comment>
<keyword id="KW-0004">4Fe-4S</keyword>
<keyword id="KW-0963">Cytoplasm</keyword>
<keyword id="KW-1015">Disulfide bond</keyword>
<keyword id="KW-0408">Iron</keyword>
<keyword id="KW-0411">Iron-sulfur</keyword>
<keyword id="KW-0479">Metal-binding</keyword>
<keyword id="KW-0489">Methyltransferase</keyword>
<keyword id="KW-1185">Reference proteome</keyword>
<keyword id="KW-0698">rRNA processing</keyword>
<keyword id="KW-0949">S-adenosyl-L-methionine</keyword>
<keyword id="KW-0808">Transferase</keyword>
<keyword id="KW-0819">tRNA processing</keyword>
<name>RLMN_SYNE7</name>
<protein>
    <recommendedName>
        <fullName evidence="1">Probable dual-specificity RNA methyltransferase RlmN</fullName>
        <ecNumber evidence="1">2.1.1.192</ecNumber>
    </recommendedName>
    <alternativeName>
        <fullName evidence="1">23S rRNA (adenine(2503)-C(2))-methyltransferase</fullName>
    </alternativeName>
    <alternativeName>
        <fullName evidence="1">23S rRNA m2A2503 methyltransferase</fullName>
    </alternativeName>
    <alternativeName>
        <fullName evidence="1">Ribosomal RNA large subunit methyltransferase N</fullName>
    </alternativeName>
    <alternativeName>
        <fullName evidence="1">tRNA (adenine(37)-C(2))-methyltransferase</fullName>
    </alternativeName>
    <alternativeName>
        <fullName evidence="1">tRNA m2A37 methyltransferase</fullName>
    </alternativeName>
</protein>
<organism>
    <name type="scientific">Synechococcus elongatus (strain ATCC 33912 / PCC 7942 / FACHB-805)</name>
    <name type="common">Anacystis nidulans R2</name>
    <dbReference type="NCBI Taxonomy" id="1140"/>
    <lineage>
        <taxon>Bacteria</taxon>
        <taxon>Bacillati</taxon>
        <taxon>Cyanobacteriota</taxon>
        <taxon>Cyanophyceae</taxon>
        <taxon>Synechococcales</taxon>
        <taxon>Synechococcaceae</taxon>
        <taxon>Synechococcus</taxon>
    </lineage>
</organism>